<proteinExistence type="inferred from homology"/>
<organism>
    <name type="scientific">Staphylococcus aureus (strain Mu3 / ATCC 700698)</name>
    <dbReference type="NCBI Taxonomy" id="418127"/>
    <lineage>
        <taxon>Bacteria</taxon>
        <taxon>Bacillati</taxon>
        <taxon>Bacillota</taxon>
        <taxon>Bacilli</taxon>
        <taxon>Bacillales</taxon>
        <taxon>Staphylococcaceae</taxon>
        <taxon>Staphylococcus</taxon>
    </lineage>
</organism>
<protein>
    <recommendedName>
        <fullName evidence="1">ATP phosphoribosyltransferase regulatory subunit</fullName>
    </recommendedName>
</protein>
<name>HISZ_STAA1</name>
<evidence type="ECO:0000255" key="1">
    <source>
        <dbReference type="HAMAP-Rule" id="MF_00125"/>
    </source>
</evidence>
<reference key="1">
    <citation type="journal article" date="2008" name="Antimicrob. Agents Chemother.">
        <title>Mutated response regulator graR is responsible for phenotypic conversion of Staphylococcus aureus from heterogeneous vancomycin-intermediate resistance to vancomycin-intermediate resistance.</title>
        <authorList>
            <person name="Neoh H.-M."/>
            <person name="Cui L."/>
            <person name="Yuzawa H."/>
            <person name="Takeuchi F."/>
            <person name="Matsuo M."/>
            <person name="Hiramatsu K."/>
        </authorList>
    </citation>
    <scope>NUCLEOTIDE SEQUENCE [LARGE SCALE GENOMIC DNA]</scope>
    <source>
        <strain>Mu3 / ATCC 700698</strain>
    </source>
</reference>
<feature type="chain" id="PRO_1000016285" description="ATP phosphoribosyltransferase regulatory subunit">
    <location>
        <begin position="1"/>
        <end position="272"/>
    </location>
</feature>
<sequence>MNNSEQLIALKESETAFLKYFNKADYELVDFSVVEKLDWKQLNHEDLQQMGERNFWQHEHQIYALRNDFTDQLLRYYSMYPTAATKVAYTGLIIRNNEAAVQVGLENYAPSLANVQQSLKLFIQFIQQQLRDNVHFVVLGHYQLLDALLDKSLQTPDILSMIEERNLSGLVTYLSTEHPIVQILKENTQQQLNVLEHYIPNDHPALVELKIWERWLHTQGYKDIHLDITAQPPRSYYTGLFIQCHFAENESRVLTGGYYKGSIEGFGLGLTL</sequence>
<keyword id="KW-0028">Amino-acid biosynthesis</keyword>
<keyword id="KW-0963">Cytoplasm</keyword>
<keyword id="KW-0368">Histidine biosynthesis</keyword>
<gene>
    <name evidence="1" type="primary">hisZ</name>
    <name type="ordered locus">SAHV_2664</name>
</gene>
<accession>A7X771</accession>
<comment type="function">
    <text evidence="1">Required for the first step of histidine biosynthesis. May allow the feedback regulation of ATP phosphoribosyltransferase activity by histidine.</text>
</comment>
<comment type="pathway">
    <text evidence="1">Amino-acid biosynthesis; L-histidine biosynthesis; L-histidine from 5-phospho-alpha-D-ribose 1-diphosphate: step 1/9.</text>
</comment>
<comment type="subunit">
    <text evidence="1">Heteromultimer composed of HisG and HisZ subunits.</text>
</comment>
<comment type="subcellular location">
    <subcellularLocation>
        <location evidence="1">Cytoplasm</location>
    </subcellularLocation>
</comment>
<comment type="miscellaneous">
    <text>This function is generally fulfilled by the C-terminal part of HisG, which is missing in some bacteria such as this one.</text>
</comment>
<comment type="similarity">
    <text evidence="1">Belongs to the class-II aminoacyl-tRNA synthetase family. HisZ subfamily.</text>
</comment>
<dbReference type="EMBL" id="AP009324">
    <property type="protein sequence ID" value="BAF79547.1"/>
    <property type="molecule type" value="Genomic_DNA"/>
</dbReference>
<dbReference type="RefSeq" id="WP_001065591.1">
    <property type="nucleotide sequence ID" value="NC_009782.1"/>
</dbReference>
<dbReference type="SMR" id="A7X771"/>
<dbReference type="KEGG" id="saw:SAHV_2664"/>
<dbReference type="HOGENOM" id="CLU_089652_0_0_9"/>
<dbReference type="UniPathway" id="UPA00031">
    <property type="reaction ID" value="UER00006"/>
</dbReference>
<dbReference type="GO" id="GO:0005737">
    <property type="term" value="C:cytoplasm"/>
    <property type="evidence" value="ECO:0007669"/>
    <property type="project" value="UniProtKB-SubCell"/>
</dbReference>
<dbReference type="GO" id="GO:0140096">
    <property type="term" value="F:catalytic activity, acting on a protein"/>
    <property type="evidence" value="ECO:0007669"/>
    <property type="project" value="UniProtKB-ARBA"/>
</dbReference>
<dbReference type="GO" id="GO:0016740">
    <property type="term" value="F:transferase activity"/>
    <property type="evidence" value="ECO:0007669"/>
    <property type="project" value="UniProtKB-ARBA"/>
</dbReference>
<dbReference type="GO" id="GO:0000105">
    <property type="term" value="P:L-histidine biosynthetic process"/>
    <property type="evidence" value="ECO:0007669"/>
    <property type="project" value="UniProtKB-UniRule"/>
</dbReference>
<dbReference type="Gene3D" id="3.30.930.10">
    <property type="entry name" value="Bira Bifunctional Protein, Domain 2"/>
    <property type="match status" value="1"/>
</dbReference>
<dbReference type="HAMAP" id="MF_00125">
    <property type="entry name" value="HisZ"/>
    <property type="match status" value="1"/>
</dbReference>
<dbReference type="InterPro" id="IPR045864">
    <property type="entry name" value="aa-tRNA-synth_II/BPL/LPL"/>
</dbReference>
<dbReference type="InterPro" id="IPR041715">
    <property type="entry name" value="HisRS-like_core"/>
</dbReference>
<dbReference type="InterPro" id="IPR004517">
    <property type="entry name" value="HisZ"/>
</dbReference>
<dbReference type="NCBIfam" id="NF008947">
    <property type="entry name" value="PRK12294.1"/>
    <property type="match status" value="1"/>
</dbReference>
<dbReference type="Pfam" id="PF13393">
    <property type="entry name" value="tRNA-synt_His"/>
    <property type="match status" value="1"/>
</dbReference>
<dbReference type="SUPFAM" id="SSF55681">
    <property type="entry name" value="Class II aaRS and biotin synthetases"/>
    <property type="match status" value="1"/>
</dbReference>